<comment type="function">
    <text evidence="1">Binds to DNA.</text>
</comment>
<comment type="subcellular location">
    <subcellularLocation>
        <location evidence="1">Nucleus</location>
    </subcellularLocation>
</comment>
<comment type="similarity">
    <text evidence="4">Belongs to the NFRKB family.</text>
</comment>
<evidence type="ECO:0000250" key="1"/>
<evidence type="ECO:0000255" key="2">
    <source>
        <dbReference type="PROSITE-ProRule" id="PRU01264"/>
    </source>
</evidence>
<evidence type="ECO:0000256" key="3">
    <source>
        <dbReference type="SAM" id="MobiDB-lite"/>
    </source>
</evidence>
<evidence type="ECO:0000305" key="4"/>
<proteinExistence type="evidence at transcript level"/>
<organism>
    <name type="scientific">Xenopus tropicalis</name>
    <name type="common">Western clawed frog</name>
    <name type="synonym">Silurana tropicalis</name>
    <dbReference type="NCBI Taxonomy" id="8364"/>
    <lineage>
        <taxon>Eukaryota</taxon>
        <taxon>Metazoa</taxon>
        <taxon>Chordata</taxon>
        <taxon>Craniata</taxon>
        <taxon>Vertebrata</taxon>
        <taxon>Euteleostomi</taxon>
        <taxon>Amphibia</taxon>
        <taxon>Batrachia</taxon>
        <taxon>Anura</taxon>
        <taxon>Pipoidea</taxon>
        <taxon>Pipidae</taxon>
        <taxon>Xenopodinae</taxon>
        <taxon>Xenopus</taxon>
        <taxon>Silurana</taxon>
    </lineage>
</organism>
<protein>
    <recommendedName>
        <fullName>Nuclear factor related to kappa-B-binding protein</fullName>
    </recommendedName>
    <alternativeName>
        <fullName>DNA-binding protein R kappa-B</fullName>
    </alternativeName>
</protein>
<reference key="1">
    <citation type="submission" date="2003-12" db="EMBL/GenBank/DDBJ databases">
        <authorList>
            <consortium name="NIH - Xenopus Gene Collection (XGC) project"/>
        </authorList>
    </citation>
    <scope>NUCLEOTIDE SEQUENCE [LARGE SCALE MRNA]</scope>
    <source>
        <tissue>Embryo</tissue>
    </source>
</reference>
<dbReference type="EMBL" id="BC063348">
    <property type="protein sequence ID" value="AAH63348.1"/>
    <property type="molecule type" value="mRNA"/>
</dbReference>
<dbReference type="RefSeq" id="NP_989207.1">
    <property type="nucleotide sequence ID" value="NM_203876.1"/>
</dbReference>
<dbReference type="SMR" id="Q6P4L9"/>
<dbReference type="FunCoup" id="Q6P4L9">
    <property type="interactions" value="3156"/>
</dbReference>
<dbReference type="STRING" id="8364.ENSXETP00000046082"/>
<dbReference type="PaxDb" id="8364-ENSXETP00000063281"/>
<dbReference type="GeneID" id="394815"/>
<dbReference type="KEGG" id="xtr:394815"/>
<dbReference type="AGR" id="Xenbase:XB-GENE-6258496"/>
<dbReference type="CTD" id="4798"/>
<dbReference type="Xenbase" id="XB-GENE-6258496">
    <property type="gene designation" value="nfrkb"/>
</dbReference>
<dbReference type="eggNOG" id="KOG1927">
    <property type="taxonomic scope" value="Eukaryota"/>
</dbReference>
<dbReference type="InParanoid" id="Q6P4L9"/>
<dbReference type="OrthoDB" id="70874at2759"/>
<dbReference type="Proteomes" id="UP000008143">
    <property type="component" value="Chromosome 7"/>
</dbReference>
<dbReference type="GO" id="GO:0031011">
    <property type="term" value="C:Ino80 complex"/>
    <property type="evidence" value="ECO:0007669"/>
    <property type="project" value="InterPro"/>
</dbReference>
<dbReference type="GO" id="GO:0003677">
    <property type="term" value="F:DNA binding"/>
    <property type="evidence" value="ECO:0007669"/>
    <property type="project" value="UniProtKB-KW"/>
</dbReference>
<dbReference type="CDD" id="cd21865">
    <property type="entry name" value="DEUBAD_NFRKB"/>
    <property type="match status" value="1"/>
</dbReference>
<dbReference type="FunFam" id="1.10.10.2430:FF:000001">
    <property type="entry name" value="Nuclear factor related to kappaB binding protein"/>
    <property type="match status" value="1"/>
</dbReference>
<dbReference type="Gene3D" id="1.10.10.2430">
    <property type="entry name" value="NFRKB winged helix-like domain"/>
    <property type="match status" value="1"/>
</dbReference>
<dbReference type="InterPro" id="IPR044867">
    <property type="entry name" value="DEUBAD_dom"/>
</dbReference>
<dbReference type="InterPro" id="IPR024867">
    <property type="entry name" value="NFRKB"/>
</dbReference>
<dbReference type="InterPro" id="IPR025220">
    <property type="entry name" value="NFRKB_winged_dom"/>
</dbReference>
<dbReference type="InterPro" id="IPR038106">
    <property type="entry name" value="NFRKB_winged_sf"/>
</dbReference>
<dbReference type="PANTHER" id="PTHR13052">
    <property type="entry name" value="NFRKB-RELATED"/>
    <property type="match status" value="1"/>
</dbReference>
<dbReference type="PANTHER" id="PTHR13052:SF3">
    <property type="entry name" value="NUCLEAR FACTOR RELATED TO KAPPA-B-BINDING PROTEIN"/>
    <property type="match status" value="1"/>
</dbReference>
<dbReference type="Pfam" id="PF14465">
    <property type="entry name" value="NFRKB_winged"/>
    <property type="match status" value="1"/>
</dbReference>
<dbReference type="PROSITE" id="PS51916">
    <property type="entry name" value="DEUBAD"/>
    <property type="match status" value="1"/>
</dbReference>
<gene>
    <name type="primary">nfrkb</name>
</gene>
<sequence>MESLDSMLTDPLELGPCVESNGTGIMEECMLGGTRVSLPEDLLEDPDLFFEVVSRDTWKNVLSDSQREHLKQFLPVFPDDNANQQEKIIQSLFRGDNFRFGNPLHIAQKLFRDGHFNPEVVKYRQLCLKSQYKRYLTSQQQYFHKLLKQILASRKELLDLARKNGPDQVLKKKPSSLRNTPEERETRAQCRYLKILREVKDECGDGTLSSEEEDLSSWLPESPTHCPSVAVPLRVIPTLSTQDMKTADKQEFTNHDLKLLLRRHREKRKRQSDHPDLITDNLSMNDIMTRVNAGRKGSLAALFDLATMKKRVKEKDDKKKKKLKTIKTEVEDYPDMPDEADIMPAVLPPETPQVTLTAVKEEPLEDVKPPLPFNEISACFFCLLLDILTMEGPCSLPLLEDKVSDWQSLPASTLNSWFSVAPNWCDLVHPALIYLSGECKVASSSFTPFVEFREKTQQWKCVVSSSDSEKELVAHFHLWLETKDQIYSKENEDCIDASTPIPRVRTDYIVRPSSGEEKHVFQEQERHRYIQPHKAFTFRMHGFESVVGPVKGVFDKETSLNKAREHSLLRSDRPAYVTILSLVRDAAARLPNGEGTRAEICELLKDSQFLAPDVTSAQVNTVVSGALDRLHYEKDPCVKYDIGRKLWIYLHRDRSEEEFERIHQAQAAAAKAKKALQQKPKPPTKMKSGSKECSLKLCGTPEPAQLSLTESSMPPTPGTPGTPTPPALPSTPMSPSTSATVNKIVASTITETQKSSQSVLLVSSPAMPQLSTLLSPAVTSQSTSVTPTSGRAATISSSTGVPQVRIVTATTGVPTTQSAAVVTQPLSPVISHIRLPVTTTPTKALAQTQVVTVPVKNQTTIGASRLGASVTTQGSVTVNTLNSSAGLASKSVVSSPGASGPAILQSITGQSIIKQVALSGQLGVKSQPSSSLPLSSTNFRIQGKDVLRLPPSSITTDAKGQTILRITPDMMATLAKSQVTAVKLSQELFSAAPVSTTGKGLLHVTSSPSSPSPPAPSTIKLTPEMKPAETSSSSFRLMPALGISVAEQKGKVVTAGESKPATTIRIVQGLGVMPPKVSATQSITVSAKPVTVPSSTIVNPVHSASNVSLPTVNSTAVKTAPTGIVVGTGAATVRQIPVTTTQQGKLPARITVPLSVLSQPMKGKGVVTAPIIKGNLGANISGLGRNIILTTVPAGTKLIAGNKPVSFLTAQQLQQLQQQGQATQVRIQTVPASHLPQGTSPASSKAVSTVVVTTTPTTKPTQEPQ</sequence>
<name>NFRKB_XENTR</name>
<feature type="chain" id="PRO_0000227809" description="Nuclear factor related to kappa-B-binding protein">
    <location>
        <begin position="1"/>
        <end position="1265"/>
    </location>
</feature>
<feature type="domain" description="DEUBAD" evidence="2">
    <location>
        <begin position="39"/>
        <end position="156"/>
    </location>
</feature>
<feature type="region of interest" description="Disordered" evidence="3">
    <location>
        <begin position="670"/>
        <end position="693"/>
    </location>
</feature>
<feature type="region of interest" description="Disordered" evidence="3">
    <location>
        <begin position="705"/>
        <end position="738"/>
    </location>
</feature>
<feature type="region of interest" description="Disordered" evidence="3">
    <location>
        <begin position="1000"/>
        <end position="1033"/>
    </location>
</feature>
<feature type="region of interest" description="Disordered" evidence="3">
    <location>
        <begin position="1234"/>
        <end position="1265"/>
    </location>
</feature>
<feature type="compositionally biased region" description="Pro residues" evidence="3">
    <location>
        <begin position="714"/>
        <end position="729"/>
    </location>
</feature>
<feature type="compositionally biased region" description="Low complexity" evidence="3">
    <location>
        <begin position="1239"/>
        <end position="1265"/>
    </location>
</feature>
<accession>Q6P4L9</accession>
<keyword id="KW-0238">DNA-binding</keyword>
<keyword id="KW-0539">Nucleus</keyword>
<keyword id="KW-1185">Reference proteome</keyword>